<keyword id="KW-0687">Ribonucleoprotein</keyword>
<keyword id="KW-0689">Ribosomal protein</keyword>
<keyword id="KW-0694">RNA-binding</keyword>
<keyword id="KW-0699">rRNA-binding</keyword>
<accession>A0KAM6</accession>
<evidence type="ECO:0000255" key="1">
    <source>
        <dbReference type="HAMAP-Rule" id="MF_01334"/>
    </source>
</evidence>
<evidence type="ECO:0000305" key="2"/>
<proteinExistence type="inferred from homology"/>
<name>RL25_BURCH</name>
<sequence length="201" mass="21566">MKVVAFERQQQGTGASRRLRNAGKTTGIVYGGEAAPQKIELDHNALWHALKKEAFHSSILDLEVAGQSQQVLLRDVQYHPFKQLVLHVDFQRVDAKKKLHTKAPLHFLNAEVSPAVKLSSAIVSHVATEIEIECLPADLPEFLEVDLSKIEAGQSLHAKDIALPKGVALVAHVDAENPVIASATVPAGAVSDAAEGETPAA</sequence>
<reference key="1">
    <citation type="submission" date="2006-08" db="EMBL/GenBank/DDBJ databases">
        <title>Complete sequence of chromosome 1 of Burkholderia cenocepacia HI2424.</title>
        <authorList>
            <person name="Copeland A."/>
            <person name="Lucas S."/>
            <person name="Lapidus A."/>
            <person name="Barry K."/>
            <person name="Detter J.C."/>
            <person name="Glavina del Rio T."/>
            <person name="Hammon N."/>
            <person name="Israni S."/>
            <person name="Pitluck S."/>
            <person name="Chain P."/>
            <person name="Malfatti S."/>
            <person name="Shin M."/>
            <person name="Vergez L."/>
            <person name="Schmutz J."/>
            <person name="Larimer F."/>
            <person name="Land M."/>
            <person name="Hauser L."/>
            <person name="Kyrpides N."/>
            <person name="Kim E."/>
            <person name="LiPuma J.J."/>
            <person name="Gonzalez C.F."/>
            <person name="Konstantinidis K."/>
            <person name="Tiedje J.M."/>
            <person name="Richardson P."/>
        </authorList>
    </citation>
    <scope>NUCLEOTIDE SEQUENCE [LARGE SCALE GENOMIC DNA]</scope>
    <source>
        <strain>HI2424</strain>
    </source>
</reference>
<feature type="chain" id="PRO_1000052871" description="Large ribosomal subunit protein bL25">
    <location>
        <begin position="1"/>
        <end position="201"/>
    </location>
</feature>
<comment type="function">
    <text evidence="1">This is one of the proteins that binds to the 5S RNA in the ribosome where it forms part of the central protuberance.</text>
</comment>
<comment type="subunit">
    <text evidence="1">Part of the 50S ribosomal subunit; part of the 5S rRNA/L5/L18/L25 subcomplex. Contacts the 5S rRNA. Binds to the 5S rRNA independently of L5 and L18.</text>
</comment>
<comment type="similarity">
    <text evidence="1">Belongs to the bacterial ribosomal protein bL25 family. CTC subfamily.</text>
</comment>
<organism>
    <name type="scientific">Burkholderia cenocepacia (strain HI2424)</name>
    <dbReference type="NCBI Taxonomy" id="331272"/>
    <lineage>
        <taxon>Bacteria</taxon>
        <taxon>Pseudomonadati</taxon>
        <taxon>Pseudomonadota</taxon>
        <taxon>Betaproteobacteria</taxon>
        <taxon>Burkholderiales</taxon>
        <taxon>Burkholderiaceae</taxon>
        <taxon>Burkholderia</taxon>
        <taxon>Burkholderia cepacia complex</taxon>
    </lineage>
</organism>
<dbReference type="EMBL" id="CP000458">
    <property type="protein sequence ID" value="ABK09553.1"/>
    <property type="molecule type" value="Genomic_DNA"/>
</dbReference>
<dbReference type="RefSeq" id="WP_011546248.1">
    <property type="nucleotide sequence ID" value="NC_008542.1"/>
</dbReference>
<dbReference type="SMR" id="A0KAM6"/>
<dbReference type="KEGG" id="bch:Bcen2424_2803"/>
<dbReference type="HOGENOM" id="CLU_075939_0_1_4"/>
<dbReference type="GO" id="GO:0022625">
    <property type="term" value="C:cytosolic large ribosomal subunit"/>
    <property type="evidence" value="ECO:0007669"/>
    <property type="project" value="TreeGrafter"/>
</dbReference>
<dbReference type="GO" id="GO:0008097">
    <property type="term" value="F:5S rRNA binding"/>
    <property type="evidence" value="ECO:0007669"/>
    <property type="project" value="InterPro"/>
</dbReference>
<dbReference type="GO" id="GO:0003735">
    <property type="term" value="F:structural constituent of ribosome"/>
    <property type="evidence" value="ECO:0007669"/>
    <property type="project" value="InterPro"/>
</dbReference>
<dbReference type="GO" id="GO:0006412">
    <property type="term" value="P:translation"/>
    <property type="evidence" value="ECO:0007669"/>
    <property type="project" value="UniProtKB-UniRule"/>
</dbReference>
<dbReference type="CDD" id="cd00495">
    <property type="entry name" value="Ribosomal_L25_TL5_CTC"/>
    <property type="match status" value="1"/>
</dbReference>
<dbReference type="Gene3D" id="2.170.120.20">
    <property type="entry name" value="Ribosomal protein L25, beta domain"/>
    <property type="match status" value="1"/>
</dbReference>
<dbReference type="Gene3D" id="2.40.240.10">
    <property type="entry name" value="Ribosomal Protein L25, Chain P"/>
    <property type="match status" value="1"/>
</dbReference>
<dbReference type="HAMAP" id="MF_01334">
    <property type="entry name" value="Ribosomal_bL25_CTC"/>
    <property type="match status" value="1"/>
</dbReference>
<dbReference type="InterPro" id="IPR020056">
    <property type="entry name" value="Rbsml_bL25/Gln-tRNA_synth_N"/>
</dbReference>
<dbReference type="InterPro" id="IPR011035">
    <property type="entry name" value="Ribosomal_bL25/Gln-tRNA_synth"/>
</dbReference>
<dbReference type="InterPro" id="IPR020057">
    <property type="entry name" value="Ribosomal_bL25_b-dom"/>
</dbReference>
<dbReference type="InterPro" id="IPR037121">
    <property type="entry name" value="Ribosomal_bL25_C"/>
</dbReference>
<dbReference type="InterPro" id="IPR001021">
    <property type="entry name" value="Ribosomal_bL25_long"/>
</dbReference>
<dbReference type="InterPro" id="IPR029751">
    <property type="entry name" value="Ribosomal_L25_dom"/>
</dbReference>
<dbReference type="InterPro" id="IPR020930">
    <property type="entry name" value="Ribosomal_uL5_bac-type"/>
</dbReference>
<dbReference type="NCBIfam" id="TIGR00731">
    <property type="entry name" value="bL25_bact_ctc"/>
    <property type="match status" value="1"/>
</dbReference>
<dbReference type="NCBIfam" id="NF004128">
    <property type="entry name" value="PRK05618.1-2"/>
    <property type="match status" value="1"/>
</dbReference>
<dbReference type="NCBIfam" id="NF004130">
    <property type="entry name" value="PRK05618.1-5"/>
    <property type="match status" value="1"/>
</dbReference>
<dbReference type="NCBIfam" id="NF004612">
    <property type="entry name" value="PRK05943.1"/>
    <property type="match status" value="1"/>
</dbReference>
<dbReference type="PANTHER" id="PTHR33284">
    <property type="entry name" value="RIBOSOMAL PROTEIN L25/GLN-TRNA SYNTHETASE, ANTI-CODON-BINDING DOMAIN-CONTAINING PROTEIN"/>
    <property type="match status" value="1"/>
</dbReference>
<dbReference type="PANTHER" id="PTHR33284:SF1">
    <property type="entry name" value="RIBOSOMAL PROTEIN L25_GLN-TRNA SYNTHETASE, ANTI-CODON-BINDING DOMAIN-CONTAINING PROTEIN"/>
    <property type="match status" value="1"/>
</dbReference>
<dbReference type="Pfam" id="PF01386">
    <property type="entry name" value="Ribosomal_L25p"/>
    <property type="match status" value="1"/>
</dbReference>
<dbReference type="Pfam" id="PF14693">
    <property type="entry name" value="Ribosomal_TL5_C"/>
    <property type="match status" value="1"/>
</dbReference>
<dbReference type="SUPFAM" id="SSF50715">
    <property type="entry name" value="Ribosomal protein L25-like"/>
    <property type="match status" value="1"/>
</dbReference>
<protein>
    <recommendedName>
        <fullName evidence="1">Large ribosomal subunit protein bL25</fullName>
    </recommendedName>
    <alternativeName>
        <fullName evidence="2">50S ribosomal protein L25</fullName>
    </alternativeName>
    <alternativeName>
        <fullName evidence="1">General stress protein CTC</fullName>
    </alternativeName>
</protein>
<gene>
    <name evidence="1" type="primary">rplY</name>
    <name evidence="1" type="synonym">ctc</name>
    <name type="ordered locus">Bcen2424_2803</name>
</gene>